<proteinExistence type="evidence at protein level"/>
<reference key="1">
    <citation type="journal article" date="1984" name="Biochem. J.">
        <title>DNA sequence around the Escherichia coli unc operon. Completion of the sequence of a 17 kilobase segment containing asnA, oriC, unc, glmS and phoS.</title>
        <authorList>
            <person name="Walker J.E."/>
            <person name="Gay N.J."/>
            <person name="Saraste M."/>
            <person name="Eberle A.N."/>
        </authorList>
    </citation>
    <scope>NUCLEOTIDE SEQUENCE [GENOMIC DNA]</scope>
</reference>
<reference key="2">
    <citation type="journal article" date="1981" name="Nucleic Acids Res.">
        <title>The atp operon: nucleotide sequence of the genes for the gamma, beta, and epsilon subunits of Escherichia coli ATP synthase.</title>
        <authorList>
            <person name="Saraste M."/>
            <person name="Gay N.J."/>
            <person name="Eberle A."/>
            <person name="Runswick M.J."/>
            <person name="Walker J.E."/>
        </authorList>
    </citation>
    <scope>NUCLEOTIDE SEQUENCE [GENOMIC DNA]</scope>
</reference>
<reference key="3">
    <citation type="journal article" date="1981" name="Biochem. Biophys. Res. Commun.">
        <title>Nucleotide sequence of the genes coding for alpha, beta and gamma subunits of the proton-translocating ATPase of Escherichia coli.</title>
        <authorList>
            <person name="Kanazawa H."/>
            <person name="Kayano T."/>
            <person name="Mabuchi K."/>
            <person name="Futai M."/>
        </authorList>
    </citation>
    <scope>NUCLEOTIDE SEQUENCE [GENOMIC DNA]</scope>
</reference>
<reference key="4">
    <citation type="journal article" date="1982" name="Ann. N. Y. Acad. Sci.">
        <title>Structure and function of H+-ATPase: what we have learned from Escherichia coli H+-ATPase.</title>
        <authorList>
            <person name="Kanazawa H."/>
            <person name="Futai M."/>
        </authorList>
    </citation>
    <scope>NUCLEOTIDE SEQUENCE [GENOMIC DNA]</scope>
</reference>
<reference key="5">
    <citation type="journal article" date="1993" name="Genomics">
        <title>DNA sequence and analysis of 136 kilobases of the Escherichia coli genome: organizational symmetry around the origin of replication.</title>
        <authorList>
            <person name="Burland V.D."/>
            <person name="Plunkett G. III"/>
            <person name="Daniels D.L."/>
            <person name="Blattner F.R."/>
        </authorList>
    </citation>
    <scope>NUCLEOTIDE SEQUENCE [LARGE SCALE GENOMIC DNA]</scope>
    <source>
        <strain>K12 / MG1655 / ATCC 47076</strain>
    </source>
</reference>
<reference key="6">
    <citation type="journal article" date="1997" name="Science">
        <title>The complete genome sequence of Escherichia coli K-12.</title>
        <authorList>
            <person name="Blattner F.R."/>
            <person name="Plunkett G. III"/>
            <person name="Bloch C.A."/>
            <person name="Perna N.T."/>
            <person name="Burland V."/>
            <person name="Riley M."/>
            <person name="Collado-Vides J."/>
            <person name="Glasner J.D."/>
            <person name="Rode C.K."/>
            <person name="Mayhew G.F."/>
            <person name="Gregor J."/>
            <person name="Davis N.W."/>
            <person name="Kirkpatrick H.A."/>
            <person name="Goeden M.A."/>
            <person name="Rose D.J."/>
            <person name="Mau B."/>
            <person name="Shao Y."/>
        </authorList>
    </citation>
    <scope>NUCLEOTIDE SEQUENCE [LARGE SCALE GENOMIC DNA]</scope>
    <source>
        <strain>K12 / MG1655 / ATCC 47076</strain>
    </source>
</reference>
<reference key="7">
    <citation type="journal article" date="2006" name="Mol. Syst. Biol.">
        <title>Highly accurate genome sequences of Escherichia coli K-12 strains MG1655 and W3110.</title>
        <authorList>
            <person name="Hayashi K."/>
            <person name="Morooka N."/>
            <person name="Yamamoto Y."/>
            <person name="Fujita K."/>
            <person name="Isono K."/>
            <person name="Choi S."/>
            <person name="Ohtsubo E."/>
            <person name="Baba T."/>
            <person name="Wanner B.L."/>
            <person name="Mori H."/>
            <person name="Horiuchi T."/>
        </authorList>
    </citation>
    <scope>NUCLEOTIDE SEQUENCE [LARGE SCALE GENOMIC DNA]</scope>
    <source>
        <strain>K12 / W3110 / ATCC 27325 / DSM 5911</strain>
    </source>
</reference>
<reference key="8">
    <citation type="journal article" date="1994" name="J. Biol. Chem.">
        <title>Structure of the gamma subunit of Escherichia coli F1 ATPase probed in trypsin digestion and biotin-avidin binding studies.</title>
        <authorList>
            <person name="Tang C."/>
            <person name="Wilkens S."/>
            <person name="Capaldi R.A."/>
        </authorList>
    </citation>
    <scope>PROTEIN SEQUENCE OF 2-9; 72-81; 203-208 AND 214-220</scope>
</reference>
<reference key="9">
    <citation type="journal article" date="1990" name="J. Biol. Chem.">
        <title>H(+)-ATPase gamma subunit of Escherichia coli. Role of the conserved carboxyl-terminal region.</title>
        <authorList>
            <person name="Iwamoto A."/>
            <person name="Miki J."/>
            <person name="Maeda M."/>
            <person name="Futai M."/>
        </authorList>
    </citation>
    <scope>NUCLEOTIDE SEQUENCE [GENOMIC DNA] OF 261-287</scope>
</reference>
<reference key="10">
    <citation type="journal article" date="2005" name="J. Biol. Chem.">
        <title>Protein complexes of the Escherichia coli cell envelope.</title>
        <authorList>
            <person name="Stenberg F."/>
            <person name="Chovanec P."/>
            <person name="Maslen S.L."/>
            <person name="Robinson C.V."/>
            <person name="Ilag L."/>
            <person name="von Heijne G."/>
            <person name="Daley D.O."/>
        </authorList>
    </citation>
    <scope>SUBUNIT</scope>
    <scope>SUBCELLULAR LOCATION</scope>
    <source>
        <strain>BL21-DE3</strain>
    </source>
</reference>
<reference key="11">
    <citation type="journal article" date="1999" name="Proc. Natl. Acad. Sci. U.S.A.">
        <title>Structural features of the gamma subunit of the Escherichia coli F(1) ATPase revealed by a 4.4-A resolution map obtained by X-ray crystallography.</title>
        <authorList>
            <person name="Hausrath A.C."/>
            <person name="Grueber G."/>
            <person name="Matthews B.W."/>
            <person name="Capaldi R.A."/>
        </authorList>
    </citation>
    <scope>X-RAY CRYSTALLOGRAPHY (4.4 ANGSTROMS)</scope>
</reference>
<sequence>MAGAKEIRSKIASVQNTQKITKAMEMVAASKMRKSQDRMAASRPYAETMRKVIGHLAHGNLEYKHPYLEDRDVKRVGYLVVSTDRGLCGGLNINLFKKLLAEMKTWTDKGVQCDLAMIGSKGVSFFNSVGGNVVAQVTGMGDNPSLSELIGPVKVMLQAYDEGRLDKLYIVSNKFINTMSQVPTISQLLPLPASDDDDLKHKSWDYLYEPDPKALLDTLLRRYVESQVYQGVVENLASEQAARMVAMKAATDNGGSLIKELQLVYNKARQASITQELTEIVSGAAAV</sequence>
<protein>
    <recommendedName>
        <fullName>ATP synthase gamma chain</fullName>
    </recommendedName>
    <alternativeName>
        <fullName>ATP synthase F1 sector gamma subunit</fullName>
    </alternativeName>
    <alternativeName>
        <fullName>F-ATPase gamma subunit</fullName>
    </alternativeName>
</protein>
<feature type="chain" id="PRO_0000073282" description="ATP synthase gamma chain">
    <location>
        <begin position="1"/>
        <end position="287"/>
    </location>
</feature>
<feature type="helix" evidence="3">
    <location>
        <begin position="20"/>
        <end position="57"/>
    </location>
</feature>
<feature type="strand" evidence="4">
    <location>
        <begin position="59"/>
        <end position="61"/>
    </location>
</feature>
<feature type="helix" evidence="3">
    <location>
        <begin position="66"/>
        <end position="68"/>
    </location>
</feature>
<feature type="strand" evidence="3">
    <location>
        <begin position="74"/>
        <end position="81"/>
    </location>
</feature>
<feature type="strand" evidence="3">
    <location>
        <begin position="84"/>
        <end position="86"/>
    </location>
</feature>
<feature type="helix" evidence="3">
    <location>
        <begin position="91"/>
        <end position="108"/>
    </location>
</feature>
<feature type="strand" evidence="3">
    <location>
        <begin position="112"/>
        <end position="119"/>
    </location>
</feature>
<feature type="helix" evidence="3">
    <location>
        <begin position="120"/>
        <end position="129"/>
    </location>
</feature>
<feature type="strand" evidence="3">
    <location>
        <begin position="133"/>
        <end position="137"/>
    </location>
</feature>
<feature type="helix" evidence="3">
    <location>
        <begin position="147"/>
        <end position="161"/>
    </location>
</feature>
<feature type="turn" evidence="5">
    <location>
        <begin position="162"/>
        <end position="164"/>
    </location>
</feature>
<feature type="strand" evidence="3">
    <location>
        <begin position="168"/>
        <end position="177"/>
    </location>
</feature>
<feature type="strand" evidence="3">
    <location>
        <begin position="180"/>
        <end position="190"/>
    </location>
</feature>
<feature type="helix" evidence="4">
    <location>
        <begin position="198"/>
        <end position="203"/>
    </location>
</feature>
<feature type="strand" evidence="3">
    <location>
        <begin position="207"/>
        <end position="210"/>
    </location>
</feature>
<feature type="helix" evidence="3">
    <location>
        <begin position="212"/>
        <end position="247"/>
    </location>
</feature>
<dbReference type="EMBL" id="X01631">
    <property type="protein sequence ID" value="CAA25781.1"/>
    <property type="molecule type" value="Genomic_DNA"/>
</dbReference>
<dbReference type="EMBL" id="V00267">
    <property type="protein sequence ID" value="CAA23526.1"/>
    <property type="molecule type" value="Genomic_DNA"/>
</dbReference>
<dbReference type="EMBL" id="J01594">
    <property type="protein sequence ID" value="AAA24736.1"/>
    <property type="status" value="ALT_FRAME"/>
    <property type="molecule type" value="Genomic_DNA"/>
</dbReference>
<dbReference type="EMBL" id="V00312">
    <property type="protein sequence ID" value="CAA23597.1"/>
    <property type="status" value="ALT_SEQ"/>
    <property type="molecule type" value="Genomic_DNA"/>
</dbReference>
<dbReference type="EMBL" id="M25464">
    <property type="protein sequence ID" value="AAA83874.1"/>
    <property type="molecule type" value="Genomic_DNA"/>
</dbReference>
<dbReference type="EMBL" id="L10328">
    <property type="protein sequence ID" value="AAA62085.1"/>
    <property type="molecule type" value="Genomic_DNA"/>
</dbReference>
<dbReference type="EMBL" id="U00096">
    <property type="protein sequence ID" value="AAC76756.1"/>
    <property type="molecule type" value="Genomic_DNA"/>
</dbReference>
<dbReference type="EMBL" id="AP009048">
    <property type="protein sequence ID" value="BAE77555.1"/>
    <property type="molecule type" value="Genomic_DNA"/>
</dbReference>
<dbReference type="EMBL" id="M34095">
    <property type="protein sequence ID" value="AAA24742.1"/>
    <property type="molecule type" value="Genomic_DNA"/>
</dbReference>
<dbReference type="PIR" id="A01038">
    <property type="entry name" value="PWECG"/>
</dbReference>
<dbReference type="RefSeq" id="NP_418189.1">
    <property type="nucleotide sequence ID" value="NC_000913.3"/>
</dbReference>
<dbReference type="RefSeq" id="WP_000896498.1">
    <property type="nucleotide sequence ID" value="NZ_STEB01000015.1"/>
</dbReference>
<dbReference type="PDB" id="1D8S">
    <property type="method" value="X-ray"/>
    <property type="resolution" value="4.40 A"/>
    <property type="chains" value="G=1-287"/>
</dbReference>
<dbReference type="PDB" id="1FS0">
    <property type="method" value="X-ray"/>
    <property type="resolution" value="2.10 A"/>
    <property type="chains" value="G=19-248"/>
</dbReference>
<dbReference type="PDB" id="3OAA">
    <property type="method" value="X-ray"/>
    <property type="resolution" value="3.26 A"/>
    <property type="chains" value="G/O/W/e=2-287"/>
</dbReference>
<dbReference type="PDB" id="5T4O">
    <property type="method" value="EM"/>
    <property type="resolution" value="6.90 A"/>
    <property type="chains" value="G=1-287"/>
</dbReference>
<dbReference type="PDB" id="5T4P">
    <property type="method" value="EM"/>
    <property type="resolution" value="7.77 A"/>
    <property type="chains" value="G=1-287"/>
</dbReference>
<dbReference type="PDB" id="5T4Q">
    <property type="method" value="EM"/>
    <property type="resolution" value="8.53 A"/>
    <property type="chains" value="G=1-287"/>
</dbReference>
<dbReference type="PDB" id="6OQR">
    <property type="method" value="EM"/>
    <property type="resolution" value="3.10 A"/>
    <property type="chains" value="G=1-287"/>
</dbReference>
<dbReference type="PDB" id="6OQS">
    <property type="method" value="EM"/>
    <property type="resolution" value="3.30 A"/>
    <property type="chains" value="G=1-287"/>
</dbReference>
<dbReference type="PDB" id="6OQT">
    <property type="method" value="EM"/>
    <property type="resolution" value="3.10 A"/>
    <property type="chains" value="G=1-287"/>
</dbReference>
<dbReference type="PDB" id="6OQU">
    <property type="method" value="EM"/>
    <property type="resolution" value="3.20 A"/>
    <property type="chains" value="G=1-287"/>
</dbReference>
<dbReference type="PDB" id="6OQV">
    <property type="method" value="EM"/>
    <property type="resolution" value="3.30 A"/>
    <property type="chains" value="G=1-287"/>
</dbReference>
<dbReference type="PDB" id="6OQW">
    <property type="method" value="EM"/>
    <property type="resolution" value="3.10 A"/>
    <property type="chains" value="G=1-287"/>
</dbReference>
<dbReference type="PDB" id="6PQV">
    <property type="method" value="EM"/>
    <property type="resolution" value="3.30 A"/>
    <property type="chains" value="G=1-287"/>
</dbReference>
<dbReference type="PDB" id="6WNQ">
    <property type="method" value="EM"/>
    <property type="resolution" value="3.40 A"/>
    <property type="chains" value="G=1-287"/>
</dbReference>
<dbReference type="PDB" id="6WNR">
    <property type="method" value="EM"/>
    <property type="resolution" value="3.30 A"/>
    <property type="chains" value="G=1-287"/>
</dbReference>
<dbReference type="PDB" id="8DBP">
    <property type="method" value="EM"/>
    <property type="resolution" value="3.60 A"/>
    <property type="chains" value="G=1-287"/>
</dbReference>
<dbReference type="PDB" id="8DBQ">
    <property type="method" value="EM"/>
    <property type="resolution" value="4.00 A"/>
    <property type="chains" value="G=2-285"/>
</dbReference>
<dbReference type="PDB" id="8DBR">
    <property type="method" value="EM"/>
    <property type="resolution" value="3.20 A"/>
    <property type="chains" value="G=1-287"/>
</dbReference>
<dbReference type="PDB" id="8DBS">
    <property type="method" value="EM"/>
    <property type="resolution" value="3.50 A"/>
    <property type="chains" value="G=2-285"/>
</dbReference>
<dbReference type="PDB" id="8DBT">
    <property type="method" value="EM"/>
    <property type="resolution" value="3.10 A"/>
    <property type="chains" value="G=1-287"/>
</dbReference>
<dbReference type="PDB" id="8DBU">
    <property type="method" value="EM"/>
    <property type="resolution" value="3.40 A"/>
    <property type="chains" value="G=1-287"/>
</dbReference>
<dbReference type="PDB" id="8DBV">
    <property type="method" value="EM"/>
    <property type="resolution" value="3.70 A"/>
    <property type="chains" value="G=1-287"/>
</dbReference>
<dbReference type="PDB" id="8DBW">
    <property type="method" value="EM"/>
    <property type="resolution" value="4.10 A"/>
    <property type="chains" value="G=2-285"/>
</dbReference>
<dbReference type="PDBsum" id="1D8S"/>
<dbReference type="PDBsum" id="1FS0"/>
<dbReference type="PDBsum" id="3OAA"/>
<dbReference type="PDBsum" id="5T4O"/>
<dbReference type="PDBsum" id="5T4P"/>
<dbReference type="PDBsum" id="5T4Q"/>
<dbReference type="PDBsum" id="6OQR"/>
<dbReference type="PDBsum" id="6OQS"/>
<dbReference type="PDBsum" id="6OQT"/>
<dbReference type="PDBsum" id="6OQU"/>
<dbReference type="PDBsum" id="6OQV"/>
<dbReference type="PDBsum" id="6OQW"/>
<dbReference type="PDBsum" id="6PQV"/>
<dbReference type="PDBsum" id="6WNQ"/>
<dbReference type="PDBsum" id="6WNR"/>
<dbReference type="PDBsum" id="8DBP"/>
<dbReference type="PDBsum" id="8DBQ"/>
<dbReference type="PDBsum" id="8DBR"/>
<dbReference type="PDBsum" id="8DBS"/>
<dbReference type="PDBsum" id="8DBT"/>
<dbReference type="PDBsum" id="8DBU"/>
<dbReference type="PDBsum" id="8DBV"/>
<dbReference type="PDBsum" id="8DBW"/>
<dbReference type="SMR" id="P0ABA6"/>
<dbReference type="BioGRID" id="4263001">
    <property type="interactions" value="6"/>
</dbReference>
<dbReference type="BioGRID" id="852545">
    <property type="interactions" value="6"/>
</dbReference>
<dbReference type="ComplexPortal" id="CPX-4022">
    <property type="entry name" value="ATP synthase complex"/>
</dbReference>
<dbReference type="DIP" id="DIP-35938N"/>
<dbReference type="FunCoup" id="P0ABA6">
    <property type="interactions" value="644"/>
</dbReference>
<dbReference type="IntAct" id="P0ABA6">
    <property type="interactions" value="15"/>
</dbReference>
<dbReference type="STRING" id="511145.b3733"/>
<dbReference type="TCDB" id="3.A.2.1.1">
    <property type="family name" value="the h+- or na+-translocating f-type, v-type and a-type atpase (f-atpase) superfamily"/>
</dbReference>
<dbReference type="jPOST" id="P0ABA6"/>
<dbReference type="PaxDb" id="511145-b3733"/>
<dbReference type="EnsemblBacteria" id="AAC76756">
    <property type="protein sequence ID" value="AAC76756"/>
    <property type="gene ID" value="b3733"/>
</dbReference>
<dbReference type="GeneID" id="93778234"/>
<dbReference type="GeneID" id="948243"/>
<dbReference type="KEGG" id="ecj:JW3711"/>
<dbReference type="KEGG" id="eco:b3733"/>
<dbReference type="KEGG" id="ecoc:C3026_20230"/>
<dbReference type="PATRIC" id="fig|1411691.4.peg.2967"/>
<dbReference type="EchoBASE" id="EB0102"/>
<dbReference type="eggNOG" id="COG0224">
    <property type="taxonomic scope" value="Bacteria"/>
</dbReference>
<dbReference type="HOGENOM" id="CLU_050669_0_1_6"/>
<dbReference type="InParanoid" id="P0ABA6"/>
<dbReference type="OMA" id="MQITSAM"/>
<dbReference type="OrthoDB" id="9812769at2"/>
<dbReference type="PhylomeDB" id="P0ABA6"/>
<dbReference type="BioCyc" id="EcoCyc:ATPG-MONOMER"/>
<dbReference type="BioCyc" id="MetaCyc:ATPG-MONOMER"/>
<dbReference type="BRENDA" id="7.1.2.2">
    <property type="organism ID" value="2026"/>
</dbReference>
<dbReference type="EvolutionaryTrace" id="P0ABA6"/>
<dbReference type="PRO" id="PR:P0ABA6"/>
<dbReference type="Proteomes" id="UP000000625">
    <property type="component" value="Chromosome"/>
</dbReference>
<dbReference type="GO" id="GO:0016020">
    <property type="term" value="C:membrane"/>
    <property type="evidence" value="ECO:0007005"/>
    <property type="project" value="UniProtKB"/>
</dbReference>
<dbReference type="GO" id="GO:0005886">
    <property type="term" value="C:plasma membrane"/>
    <property type="evidence" value="ECO:0000303"/>
    <property type="project" value="ComplexPortal"/>
</dbReference>
<dbReference type="GO" id="GO:0045259">
    <property type="term" value="C:proton-transporting ATP synthase complex"/>
    <property type="evidence" value="ECO:0000353"/>
    <property type="project" value="ComplexPortal"/>
</dbReference>
<dbReference type="GO" id="GO:0005524">
    <property type="term" value="F:ATP binding"/>
    <property type="evidence" value="ECO:0007669"/>
    <property type="project" value="UniProtKB-UniRule"/>
</dbReference>
<dbReference type="GO" id="GO:0046933">
    <property type="term" value="F:proton-transporting ATP synthase activity, rotational mechanism"/>
    <property type="evidence" value="ECO:0000314"/>
    <property type="project" value="EcoCyc"/>
</dbReference>
<dbReference type="GO" id="GO:0046961">
    <property type="term" value="F:proton-transporting ATPase activity, rotational mechanism"/>
    <property type="evidence" value="ECO:0000314"/>
    <property type="project" value="EcoCyc"/>
</dbReference>
<dbReference type="GO" id="GO:0015986">
    <property type="term" value="P:proton motive force-driven ATP synthesis"/>
    <property type="evidence" value="ECO:0000318"/>
    <property type="project" value="GO_Central"/>
</dbReference>
<dbReference type="GO" id="GO:0042777">
    <property type="term" value="P:proton motive force-driven plasma membrane ATP synthesis"/>
    <property type="evidence" value="ECO:0000315"/>
    <property type="project" value="ComplexPortal"/>
</dbReference>
<dbReference type="CDD" id="cd12151">
    <property type="entry name" value="F1-ATPase_gamma"/>
    <property type="match status" value="1"/>
</dbReference>
<dbReference type="FunFam" id="1.10.287.80:FF:000005">
    <property type="entry name" value="ATP synthase gamma chain"/>
    <property type="match status" value="2"/>
</dbReference>
<dbReference type="FunFam" id="3.40.1380.10:FF:000001">
    <property type="entry name" value="ATP synthase gamma chain"/>
    <property type="match status" value="1"/>
</dbReference>
<dbReference type="Gene3D" id="3.40.1380.10">
    <property type="match status" value="1"/>
</dbReference>
<dbReference type="Gene3D" id="1.10.287.80">
    <property type="entry name" value="ATP synthase, gamma subunit, helix hairpin domain"/>
    <property type="match status" value="1"/>
</dbReference>
<dbReference type="HAMAP" id="MF_00815">
    <property type="entry name" value="ATP_synth_gamma_bact"/>
    <property type="match status" value="1"/>
</dbReference>
<dbReference type="InterPro" id="IPR035968">
    <property type="entry name" value="ATP_synth_F1_ATPase_gsu"/>
</dbReference>
<dbReference type="InterPro" id="IPR000131">
    <property type="entry name" value="ATP_synth_F1_gsu"/>
</dbReference>
<dbReference type="InterPro" id="IPR023632">
    <property type="entry name" value="ATP_synth_F1_gsu_CS"/>
</dbReference>
<dbReference type="NCBIfam" id="TIGR01146">
    <property type="entry name" value="ATPsyn_F1gamma"/>
    <property type="match status" value="1"/>
</dbReference>
<dbReference type="NCBIfam" id="NF004144">
    <property type="entry name" value="PRK05621.1-1"/>
    <property type="match status" value="1"/>
</dbReference>
<dbReference type="PANTHER" id="PTHR11693">
    <property type="entry name" value="ATP SYNTHASE GAMMA CHAIN"/>
    <property type="match status" value="1"/>
</dbReference>
<dbReference type="PANTHER" id="PTHR11693:SF22">
    <property type="entry name" value="ATP SYNTHASE SUBUNIT GAMMA, MITOCHONDRIAL"/>
    <property type="match status" value="1"/>
</dbReference>
<dbReference type="Pfam" id="PF00231">
    <property type="entry name" value="ATP-synt"/>
    <property type="match status" value="1"/>
</dbReference>
<dbReference type="PRINTS" id="PR00126">
    <property type="entry name" value="ATPASEGAMMA"/>
</dbReference>
<dbReference type="SUPFAM" id="SSF52943">
    <property type="entry name" value="ATP synthase (F1-ATPase), gamma subunit"/>
    <property type="match status" value="1"/>
</dbReference>
<dbReference type="PROSITE" id="PS00153">
    <property type="entry name" value="ATPASE_GAMMA"/>
    <property type="match status" value="1"/>
</dbReference>
<organism>
    <name type="scientific">Escherichia coli (strain K12)</name>
    <dbReference type="NCBI Taxonomy" id="83333"/>
    <lineage>
        <taxon>Bacteria</taxon>
        <taxon>Pseudomonadati</taxon>
        <taxon>Pseudomonadota</taxon>
        <taxon>Gammaproteobacteria</taxon>
        <taxon>Enterobacterales</taxon>
        <taxon>Enterobacteriaceae</taxon>
        <taxon>Escherichia</taxon>
    </lineage>
</organism>
<evidence type="ECO:0000269" key="1">
    <source>
    </source>
</evidence>
<evidence type="ECO:0000305" key="2"/>
<evidence type="ECO:0007829" key="3">
    <source>
        <dbReference type="PDB" id="1FS0"/>
    </source>
</evidence>
<evidence type="ECO:0007829" key="4">
    <source>
        <dbReference type="PDB" id="6OQR"/>
    </source>
</evidence>
<evidence type="ECO:0007829" key="5">
    <source>
        <dbReference type="PDB" id="6OQT"/>
    </source>
</evidence>
<keyword id="KW-0002">3D-structure</keyword>
<keyword id="KW-0066">ATP synthesis</keyword>
<keyword id="KW-0997">Cell inner membrane</keyword>
<keyword id="KW-1003">Cell membrane</keyword>
<keyword id="KW-0139">CF(1)</keyword>
<keyword id="KW-0903">Direct protein sequencing</keyword>
<keyword id="KW-0375">Hydrogen ion transport</keyword>
<keyword id="KW-0406">Ion transport</keyword>
<keyword id="KW-0472">Membrane</keyword>
<keyword id="KW-1185">Reference proteome</keyword>
<keyword id="KW-0813">Transport</keyword>
<name>ATPG_ECOLI</name>
<accession>P0ABA6</accession>
<accession>P00837</accession>
<accession>P00838</accession>
<accession>Q2M851</accession>
<comment type="function">
    <text>Produces ATP from ADP in the presence of a proton gradient across the membrane. The gamma chain is believed to be important in regulating ATPase activity and the flow of protons through the CF(0) complex.</text>
</comment>
<comment type="subunit">
    <text evidence="1">F-type ATPases have 2 components, CF(1) - the catalytic core - and CF(0) - the membrane proton channel. CF(1) has five subunits: alpha(3), beta(3), gamma(1), delta(1), epsilon(1). CF(0) has three main subunits: a, b and c.</text>
</comment>
<comment type="interaction">
    <interactant intactId="EBI-544306">
        <id>P0ABA6</id>
    </interactant>
    <interactant intactId="EBI-544362">
        <id>P0A6E6</id>
        <label>atpC</label>
    </interactant>
    <organismsDiffer>false</organismsDiffer>
    <experiments>5</experiments>
</comment>
<comment type="subcellular location">
    <subcellularLocation>
        <location evidence="1">Cell inner membrane</location>
        <topology evidence="1">Peripheral membrane protein</topology>
    </subcellularLocation>
</comment>
<comment type="similarity">
    <text evidence="2">Belongs to the ATPase gamma chain family.</text>
</comment>
<comment type="sequence caution" evidence="2">
    <conflict type="frameshift">
        <sequence resource="EMBL-CDS" id="CAA23597"/>
    </conflict>
</comment>
<comment type="sequence caution" evidence="2">
    <conflict type="miscellaneous discrepancy">
        <sequence resource="EMBL-CDS" id="CAA23597"/>
    </conflict>
    <text>Sequencing errors.</text>
</comment>
<gene>
    <name type="primary">atpG</name>
    <name type="synonym">papC</name>
    <name type="synonym">uncG</name>
    <name type="ordered locus">b3733</name>
    <name type="ordered locus">JW3711</name>
</gene>